<sequence length="90" mass="9980">MTKKELIDRVAKKAGAKKKDVKLILDTILETITEALAKGEKVQIVGFGSFEVRKAAARKGVNPQTRKPITIPERKVPKFKPGKALKEKVK</sequence>
<evidence type="ECO:0000256" key="1">
    <source>
        <dbReference type="SAM" id="MobiDB-lite"/>
    </source>
</evidence>
<evidence type="ECO:0000305" key="2"/>
<evidence type="ECO:0007829" key="3">
    <source>
        <dbReference type="PDB" id="1B8Z"/>
    </source>
</evidence>
<feature type="chain" id="PRO_0000104989" description="DNA-binding protein HU">
    <location>
        <begin position="1"/>
        <end position="90"/>
    </location>
</feature>
<feature type="region of interest" description="Disordered" evidence="1">
    <location>
        <begin position="57"/>
        <end position="90"/>
    </location>
</feature>
<feature type="sequence conflict" description="In Ref. 1; AAA27416." evidence="2" ref="1">
    <original>T</original>
    <variation>N</variation>
    <location>
        <position position="2"/>
    </location>
</feature>
<feature type="helix" evidence="3">
    <location>
        <begin position="3"/>
        <end position="14"/>
    </location>
</feature>
<feature type="helix" evidence="3">
    <location>
        <begin position="18"/>
        <end position="37"/>
    </location>
</feature>
<feature type="strand" evidence="3">
    <location>
        <begin position="42"/>
        <end position="44"/>
    </location>
</feature>
<feature type="turn" evidence="3">
    <location>
        <begin position="45"/>
        <end position="47"/>
    </location>
</feature>
<feature type="strand" evidence="3">
    <location>
        <begin position="48"/>
        <end position="51"/>
    </location>
</feature>
<feature type="strand" evidence="3">
    <location>
        <begin position="78"/>
        <end position="81"/>
    </location>
</feature>
<feature type="helix" evidence="3">
    <location>
        <begin position="83"/>
        <end position="89"/>
    </location>
</feature>
<proteinExistence type="evidence at protein level"/>
<name>DBH_THEMA</name>
<keyword id="KW-0002">3D-structure</keyword>
<keyword id="KW-0226">DNA condensation</keyword>
<keyword id="KW-0238">DNA-binding</keyword>
<keyword id="KW-1185">Reference proteome</keyword>
<gene>
    <name type="primary">hup</name>
    <name type="ordered locus">TM_0266</name>
</gene>
<accession>P36206</accession>
<comment type="function">
    <text>Histone-like DNA-binding protein which is capable of wrapping DNA to stabilize it, and thus to prevent its denaturation under extreme environmental conditions.</text>
</comment>
<comment type="similarity">
    <text evidence="2">Belongs to the bacterial histone-like protein family.</text>
</comment>
<protein>
    <recommendedName>
        <fullName>DNA-binding protein HU</fullName>
    </recommendedName>
</protein>
<reference key="1">
    <citation type="submission" date="1993-08" db="EMBL/GenBank/DDBJ databases">
        <title>The histone-like protein (HU) of Thermotoga maritima.</title>
        <authorList>
            <person name="Markiewicz P.G."/>
            <person name="Ehret S."/>
            <person name="Miller J.H."/>
        </authorList>
    </citation>
    <scope>NUCLEOTIDE SEQUENCE [GENOMIC DNA]</scope>
</reference>
<reference key="2">
    <citation type="journal article" date="1999" name="Nature">
        <title>Evidence for lateral gene transfer between Archaea and Bacteria from genome sequence of Thermotoga maritima.</title>
        <authorList>
            <person name="Nelson K.E."/>
            <person name="Clayton R.A."/>
            <person name="Gill S.R."/>
            <person name="Gwinn M.L."/>
            <person name="Dodson R.J."/>
            <person name="Haft D.H."/>
            <person name="Hickey E.K."/>
            <person name="Peterson J.D."/>
            <person name="Nelson W.C."/>
            <person name="Ketchum K.A."/>
            <person name="McDonald L.A."/>
            <person name="Utterback T.R."/>
            <person name="Malek J.A."/>
            <person name="Linher K.D."/>
            <person name="Garrett M.M."/>
            <person name="Stewart A.M."/>
            <person name="Cotton M.D."/>
            <person name="Pratt M.S."/>
            <person name="Phillips C.A."/>
            <person name="Richardson D.L."/>
            <person name="Heidelberg J.F."/>
            <person name="Sutton G.G."/>
            <person name="Fleischmann R.D."/>
            <person name="Eisen J.A."/>
            <person name="White O."/>
            <person name="Salzberg S.L."/>
            <person name="Smith H.O."/>
            <person name="Venter J.C."/>
            <person name="Fraser C.M."/>
        </authorList>
    </citation>
    <scope>NUCLEOTIDE SEQUENCE [LARGE SCALE GENOMIC DNA]</scope>
    <source>
        <strain>ATCC 43589 / DSM 3109 / JCM 10099 / NBRC 100826 / MSB8</strain>
    </source>
</reference>
<reference key="3">
    <citation type="journal article" date="1998" name="Acta Crystallogr. D">
        <title>Cloning, overproduction, purification and crystallization of the DNA binding protein HU from the hyperthermophilic eubacterium Thermotoga maritima.</title>
        <authorList>
            <person name="Christodoulou E."/>
            <person name="Vorgias C.E."/>
        </authorList>
    </citation>
    <scope>X-RAY CRYSTALLOGRAPHY (1.6 ANGSTROMS)</scope>
</reference>
<dbReference type="EMBL" id="L23541">
    <property type="protein sequence ID" value="AAA27416.1"/>
    <property type="molecule type" value="Genomic_DNA"/>
</dbReference>
<dbReference type="EMBL" id="AE000512">
    <property type="protein sequence ID" value="AAD35355.1"/>
    <property type="molecule type" value="Genomic_DNA"/>
</dbReference>
<dbReference type="PIR" id="H72396">
    <property type="entry name" value="H72396"/>
</dbReference>
<dbReference type="RefSeq" id="NP_228079.1">
    <property type="nucleotide sequence ID" value="NC_000853.1"/>
</dbReference>
<dbReference type="RefSeq" id="WP_010865085.1">
    <property type="nucleotide sequence ID" value="NC_000853.1"/>
</dbReference>
<dbReference type="PDB" id="1B8Z">
    <property type="method" value="X-ray"/>
    <property type="resolution" value="1.60 A"/>
    <property type="chains" value="A/B=1-90"/>
</dbReference>
<dbReference type="PDB" id="1RIY">
    <property type="method" value="X-ray"/>
    <property type="resolution" value="1.80 A"/>
    <property type="chains" value="A=1-90"/>
</dbReference>
<dbReference type="PDBsum" id="1B8Z"/>
<dbReference type="PDBsum" id="1RIY"/>
<dbReference type="SMR" id="P36206"/>
<dbReference type="FunCoup" id="P36206">
    <property type="interactions" value="333"/>
</dbReference>
<dbReference type="STRING" id="243274.TM_0266"/>
<dbReference type="PaxDb" id="243274-THEMA_03395"/>
<dbReference type="EnsemblBacteria" id="AAD35355">
    <property type="protein sequence ID" value="AAD35355"/>
    <property type="gene ID" value="TM_0266"/>
</dbReference>
<dbReference type="KEGG" id="tma:TM0266"/>
<dbReference type="PATRIC" id="fig|243274.5.peg.270"/>
<dbReference type="eggNOG" id="COG0776">
    <property type="taxonomic scope" value="Bacteria"/>
</dbReference>
<dbReference type="InParanoid" id="P36206"/>
<dbReference type="OrthoDB" id="9799835at2"/>
<dbReference type="EvolutionaryTrace" id="P36206"/>
<dbReference type="Proteomes" id="UP000008183">
    <property type="component" value="Chromosome"/>
</dbReference>
<dbReference type="GO" id="GO:0005829">
    <property type="term" value="C:cytosol"/>
    <property type="evidence" value="ECO:0000318"/>
    <property type="project" value="GO_Central"/>
</dbReference>
<dbReference type="GO" id="GO:0003677">
    <property type="term" value="F:DNA binding"/>
    <property type="evidence" value="ECO:0000318"/>
    <property type="project" value="GO_Central"/>
</dbReference>
<dbReference type="GO" id="GO:0030527">
    <property type="term" value="F:structural constituent of chromatin"/>
    <property type="evidence" value="ECO:0007669"/>
    <property type="project" value="InterPro"/>
</dbReference>
<dbReference type="GO" id="GO:0030261">
    <property type="term" value="P:chromosome condensation"/>
    <property type="evidence" value="ECO:0007669"/>
    <property type="project" value="UniProtKB-KW"/>
</dbReference>
<dbReference type="CDD" id="cd13831">
    <property type="entry name" value="HU"/>
    <property type="match status" value="1"/>
</dbReference>
<dbReference type="FunFam" id="4.10.520.10:FF:000001">
    <property type="entry name" value="DNA-binding protein HU"/>
    <property type="match status" value="1"/>
</dbReference>
<dbReference type="Gene3D" id="4.10.520.10">
    <property type="entry name" value="IHF-like DNA-binding proteins"/>
    <property type="match status" value="1"/>
</dbReference>
<dbReference type="InterPro" id="IPR000119">
    <property type="entry name" value="Hist_DNA-bd"/>
</dbReference>
<dbReference type="InterPro" id="IPR020816">
    <property type="entry name" value="Histone-like_DNA-bd_CS"/>
</dbReference>
<dbReference type="InterPro" id="IPR010992">
    <property type="entry name" value="IHF-like_DNA-bd_dom_sf"/>
</dbReference>
<dbReference type="PANTHER" id="PTHR33175">
    <property type="entry name" value="DNA-BINDING PROTEIN HU"/>
    <property type="match status" value="1"/>
</dbReference>
<dbReference type="PANTHER" id="PTHR33175:SF3">
    <property type="entry name" value="DNA-BINDING PROTEIN HU-BETA"/>
    <property type="match status" value="1"/>
</dbReference>
<dbReference type="Pfam" id="PF00216">
    <property type="entry name" value="Bac_DNA_binding"/>
    <property type="match status" value="1"/>
</dbReference>
<dbReference type="PRINTS" id="PR01727">
    <property type="entry name" value="DNABINDINGHU"/>
</dbReference>
<dbReference type="SMART" id="SM00411">
    <property type="entry name" value="BHL"/>
    <property type="match status" value="1"/>
</dbReference>
<dbReference type="SUPFAM" id="SSF47729">
    <property type="entry name" value="IHF-like DNA-binding proteins"/>
    <property type="match status" value="1"/>
</dbReference>
<dbReference type="PROSITE" id="PS00045">
    <property type="entry name" value="HISTONE_LIKE"/>
    <property type="match status" value="1"/>
</dbReference>
<organism>
    <name type="scientific">Thermotoga maritima (strain ATCC 43589 / DSM 3109 / JCM 10099 / NBRC 100826 / MSB8)</name>
    <dbReference type="NCBI Taxonomy" id="243274"/>
    <lineage>
        <taxon>Bacteria</taxon>
        <taxon>Thermotogati</taxon>
        <taxon>Thermotogota</taxon>
        <taxon>Thermotogae</taxon>
        <taxon>Thermotogales</taxon>
        <taxon>Thermotogaceae</taxon>
        <taxon>Thermotoga</taxon>
    </lineage>
</organism>